<reference key="1">
    <citation type="submission" date="2007-11" db="EMBL/GenBank/DDBJ databases">
        <title>Complete genome sequence of Clostridium phytofermentans ISDg.</title>
        <authorList>
            <person name="Leschine S.B."/>
            <person name="Warnick T.A."/>
            <person name="Blanchard J.L."/>
            <person name="Schnell D.J."/>
            <person name="Petit E.L."/>
            <person name="LaTouf W.G."/>
            <person name="Copeland A."/>
            <person name="Lucas S."/>
            <person name="Lapidus A."/>
            <person name="Barry K."/>
            <person name="Glavina del Rio T."/>
            <person name="Dalin E."/>
            <person name="Tice H."/>
            <person name="Pitluck S."/>
            <person name="Kiss H."/>
            <person name="Brettin T."/>
            <person name="Bruce D."/>
            <person name="Detter J.C."/>
            <person name="Han C."/>
            <person name="Kuske C."/>
            <person name="Schmutz J."/>
            <person name="Larimer F."/>
            <person name="Land M."/>
            <person name="Hauser L."/>
            <person name="Kyrpides N."/>
            <person name="Kim E.A."/>
            <person name="Richardson P."/>
        </authorList>
    </citation>
    <scope>NUCLEOTIDE SEQUENCE [LARGE SCALE GENOMIC DNA]</scope>
    <source>
        <strain>ATCC 700394 / DSM 18823 / ISDg</strain>
    </source>
</reference>
<gene>
    <name evidence="1" type="primary">leuC</name>
    <name type="ordered locus">Cphy_3356</name>
</gene>
<feature type="chain" id="PRO_1000084237" description="3-isopropylmalate dehydratase large subunit">
    <location>
        <begin position="1"/>
        <end position="421"/>
    </location>
</feature>
<feature type="binding site" evidence="1">
    <location>
        <position position="300"/>
    </location>
    <ligand>
        <name>[4Fe-4S] cluster</name>
        <dbReference type="ChEBI" id="CHEBI:49883"/>
    </ligand>
</feature>
<feature type="binding site" evidence="1">
    <location>
        <position position="360"/>
    </location>
    <ligand>
        <name>[4Fe-4S] cluster</name>
        <dbReference type="ChEBI" id="CHEBI:49883"/>
    </ligand>
</feature>
<feature type="binding site" evidence="1">
    <location>
        <position position="363"/>
    </location>
    <ligand>
        <name>[4Fe-4S] cluster</name>
        <dbReference type="ChEBI" id="CHEBI:49883"/>
    </ligand>
</feature>
<proteinExistence type="inferred from homology"/>
<accession>A9KT79</accession>
<name>LEUC_LACP7</name>
<organism>
    <name type="scientific">Lachnoclostridium phytofermentans (strain ATCC 700394 / DSM 18823 / ISDg)</name>
    <name type="common">Clostridium phytofermentans</name>
    <dbReference type="NCBI Taxonomy" id="357809"/>
    <lineage>
        <taxon>Bacteria</taxon>
        <taxon>Bacillati</taxon>
        <taxon>Bacillota</taxon>
        <taxon>Clostridia</taxon>
        <taxon>Lachnospirales</taxon>
        <taxon>Lachnospiraceae</taxon>
    </lineage>
</organism>
<comment type="function">
    <text evidence="1">Catalyzes the isomerization between 2-isopropylmalate and 3-isopropylmalate, via the formation of 2-isopropylmaleate.</text>
</comment>
<comment type="catalytic activity">
    <reaction evidence="1">
        <text>(2R,3S)-3-isopropylmalate = (2S)-2-isopropylmalate</text>
        <dbReference type="Rhea" id="RHEA:32287"/>
        <dbReference type="ChEBI" id="CHEBI:1178"/>
        <dbReference type="ChEBI" id="CHEBI:35121"/>
        <dbReference type="EC" id="4.2.1.33"/>
    </reaction>
</comment>
<comment type="cofactor">
    <cofactor evidence="1">
        <name>[4Fe-4S] cluster</name>
        <dbReference type="ChEBI" id="CHEBI:49883"/>
    </cofactor>
    <text evidence="1">Binds 1 [4Fe-4S] cluster per subunit.</text>
</comment>
<comment type="pathway">
    <text evidence="1">Amino-acid biosynthesis; L-leucine biosynthesis; L-leucine from 3-methyl-2-oxobutanoate: step 2/4.</text>
</comment>
<comment type="subunit">
    <text evidence="1">Heterodimer of LeuC and LeuD.</text>
</comment>
<comment type="similarity">
    <text evidence="1">Belongs to the aconitase/IPM isomerase family. LeuC type 2 subfamily.</text>
</comment>
<sequence>MGMTMTQKILAAHANLPEVKAGQLIEANLDLVLANDITGPVAIHEIQRLKKKTVFDKDKIALVPDHFTPNKDIKSAEHCKCVREFAKEHDITNYFEIGEMGIEHALLPEKGLIVAGETCIGADSHTCTYGALGAFSTGVGSTDMGAGMITGKAWFKVPAAIKFILTGEPKEWVSGKDVILHIIGMIGVDGALYKSMEFVGAGIKNLTMDDRFTIANMAIEAGAKNGIFPVDDLTISYMKEHGAKPYTIYEADEDAEYEQIITINLSELEPTVAFPHLPENTKTVKEAGEVRIDQVVIGSCTNGRIGDLRIAAKVLEGRKVAKGMRAIVFPATQAIYLQAIEEGLIQTFIKAGCVVSTPTCGPCLGGHMGILAAGERAASTTNRNFVGRMGHVESEVYLCSPAVAAASAVTGKISEPSELFS</sequence>
<keyword id="KW-0004">4Fe-4S</keyword>
<keyword id="KW-0028">Amino-acid biosynthesis</keyword>
<keyword id="KW-0100">Branched-chain amino acid biosynthesis</keyword>
<keyword id="KW-0408">Iron</keyword>
<keyword id="KW-0411">Iron-sulfur</keyword>
<keyword id="KW-0432">Leucine biosynthesis</keyword>
<keyword id="KW-0456">Lyase</keyword>
<keyword id="KW-0479">Metal-binding</keyword>
<keyword id="KW-1185">Reference proteome</keyword>
<protein>
    <recommendedName>
        <fullName evidence="1">3-isopropylmalate dehydratase large subunit</fullName>
        <ecNumber evidence="1">4.2.1.33</ecNumber>
    </recommendedName>
    <alternativeName>
        <fullName evidence="1">Alpha-IPM isomerase</fullName>
        <shortName evidence="1">IPMI</shortName>
    </alternativeName>
    <alternativeName>
        <fullName evidence="1">Isopropylmalate isomerase</fullName>
    </alternativeName>
</protein>
<evidence type="ECO:0000255" key="1">
    <source>
        <dbReference type="HAMAP-Rule" id="MF_01027"/>
    </source>
</evidence>
<dbReference type="EC" id="4.2.1.33" evidence="1"/>
<dbReference type="EMBL" id="CP000885">
    <property type="protein sequence ID" value="ABX43709.1"/>
    <property type="molecule type" value="Genomic_DNA"/>
</dbReference>
<dbReference type="RefSeq" id="WP_012201358.1">
    <property type="nucleotide sequence ID" value="NC_010001.1"/>
</dbReference>
<dbReference type="SMR" id="A9KT79"/>
<dbReference type="STRING" id="357809.Cphy_3356"/>
<dbReference type="KEGG" id="cpy:Cphy_3356"/>
<dbReference type="eggNOG" id="COG0065">
    <property type="taxonomic scope" value="Bacteria"/>
</dbReference>
<dbReference type="HOGENOM" id="CLU_006714_3_4_9"/>
<dbReference type="OrthoDB" id="9802769at2"/>
<dbReference type="UniPathway" id="UPA00048">
    <property type="reaction ID" value="UER00071"/>
</dbReference>
<dbReference type="Proteomes" id="UP000000370">
    <property type="component" value="Chromosome"/>
</dbReference>
<dbReference type="GO" id="GO:0003861">
    <property type="term" value="F:3-isopropylmalate dehydratase activity"/>
    <property type="evidence" value="ECO:0007669"/>
    <property type="project" value="UniProtKB-UniRule"/>
</dbReference>
<dbReference type="GO" id="GO:0051539">
    <property type="term" value="F:4 iron, 4 sulfur cluster binding"/>
    <property type="evidence" value="ECO:0007669"/>
    <property type="project" value="UniProtKB-KW"/>
</dbReference>
<dbReference type="GO" id="GO:0046872">
    <property type="term" value="F:metal ion binding"/>
    <property type="evidence" value="ECO:0007669"/>
    <property type="project" value="UniProtKB-KW"/>
</dbReference>
<dbReference type="GO" id="GO:0009098">
    <property type="term" value="P:L-leucine biosynthetic process"/>
    <property type="evidence" value="ECO:0007669"/>
    <property type="project" value="UniProtKB-UniRule"/>
</dbReference>
<dbReference type="CDD" id="cd01583">
    <property type="entry name" value="IPMI"/>
    <property type="match status" value="1"/>
</dbReference>
<dbReference type="Gene3D" id="3.30.499.10">
    <property type="entry name" value="Aconitase, domain 3"/>
    <property type="match status" value="2"/>
</dbReference>
<dbReference type="HAMAP" id="MF_01027">
    <property type="entry name" value="LeuC_type2"/>
    <property type="match status" value="1"/>
</dbReference>
<dbReference type="InterPro" id="IPR015931">
    <property type="entry name" value="Acnase/IPM_dHydase_lsu_aba_1/3"/>
</dbReference>
<dbReference type="InterPro" id="IPR001030">
    <property type="entry name" value="Acoase/IPM_deHydtase_lsu_aba"/>
</dbReference>
<dbReference type="InterPro" id="IPR018136">
    <property type="entry name" value="Aconitase_4Fe-4S_BS"/>
</dbReference>
<dbReference type="InterPro" id="IPR036008">
    <property type="entry name" value="Aconitase_4Fe-4S_dom"/>
</dbReference>
<dbReference type="InterPro" id="IPR011826">
    <property type="entry name" value="HAcnase/IPMdehydase_lsu_prok"/>
</dbReference>
<dbReference type="InterPro" id="IPR006251">
    <property type="entry name" value="Homoacnase/IPMdehydase_lsu"/>
</dbReference>
<dbReference type="InterPro" id="IPR050067">
    <property type="entry name" value="IPM_dehydratase_rel_enz"/>
</dbReference>
<dbReference type="InterPro" id="IPR033941">
    <property type="entry name" value="IPMI_cat"/>
</dbReference>
<dbReference type="InterPro" id="IPR011823">
    <property type="entry name" value="IsopropMal_deHydtase_lsu_bac"/>
</dbReference>
<dbReference type="NCBIfam" id="TIGR01343">
    <property type="entry name" value="hacA_fam"/>
    <property type="match status" value="1"/>
</dbReference>
<dbReference type="NCBIfam" id="TIGR02086">
    <property type="entry name" value="IPMI_arch"/>
    <property type="match status" value="1"/>
</dbReference>
<dbReference type="NCBIfam" id="TIGR02083">
    <property type="entry name" value="LEU2"/>
    <property type="match status" value="1"/>
</dbReference>
<dbReference type="NCBIfam" id="NF001614">
    <property type="entry name" value="PRK00402.1"/>
    <property type="match status" value="1"/>
</dbReference>
<dbReference type="PANTHER" id="PTHR43822:SF16">
    <property type="entry name" value="3-ISOPROPYLMALATE DEHYDRATASE LARGE SUBUNIT 2"/>
    <property type="match status" value="1"/>
</dbReference>
<dbReference type="PANTHER" id="PTHR43822">
    <property type="entry name" value="HOMOACONITASE, MITOCHONDRIAL-RELATED"/>
    <property type="match status" value="1"/>
</dbReference>
<dbReference type="Pfam" id="PF00330">
    <property type="entry name" value="Aconitase"/>
    <property type="match status" value="1"/>
</dbReference>
<dbReference type="PRINTS" id="PR00415">
    <property type="entry name" value="ACONITASE"/>
</dbReference>
<dbReference type="SUPFAM" id="SSF53732">
    <property type="entry name" value="Aconitase iron-sulfur domain"/>
    <property type="match status" value="1"/>
</dbReference>
<dbReference type="PROSITE" id="PS00450">
    <property type="entry name" value="ACONITASE_1"/>
    <property type="match status" value="1"/>
</dbReference>
<dbReference type="PROSITE" id="PS01244">
    <property type="entry name" value="ACONITASE_2"/>
    <property type="match status" value="1"/>
</dbReference>